<organism>
    <name type="scientific">Synechococcus sp. (strain CC9605)</name>
    <dbReference type="NCBI Taxonomy" id="110662"/>
    <lineage>
        <taxon>Bacteria</taxon>
        <taxon>Bacillati</taxon>
        <taxon>Cyanobacteriota</taxon>
        <taxon>Cyanophyceae</taxon>
        <taxon>Synechococcales</taxon>
        <taxon>Synechococcaceae</taxon>
        <taxon>Synechococcus</taxon>
    </lineage>
</organism>
<sequence length="295" mass="32054">MEIRRRPPNPKVRVAHLEYAVPHDDEEPRHILEKIVWEKDREIDAARDKVPLDNLKQQIAKLPPTKDFLGALQAAATKPAVIAEVKKASPSKGVIREDFDPVAIAKAYASGGASCLSVLTDKTFFQGGFDVLVEVRQAVDLPLLCKEFVLSPYQLFQARAAGADAVLLIAAILSDQDLRYLNKAAAALGLTVLVEVHDATEMDRVLSIGGFPLIGINNRDLTSFETDLATTERLLVDFNDRLKQQGVLLVSESGLFSRADLDRVQAAGAGAVLVGEALMRQQDVEAGLVQLIQAG</sequence>
<accession>Q3AL94</accession>
<proteinExistence type="inferred from homology"/>
<feature type="chain" id="PRO_1000018563" description="Indole-3-glycerol phosphate synthase">
    <location>
        <begin position="1"/>
        <end position="295"/>
    </location>
</feature>
<comment type="catalytic activity">
    <reaction evidence="1">
        <text>1-(2-carboxyphenylamino)-1-deoxy-D-ribulose 5-phosphate + H(+) = (1S,2R)-1-C-(indol-3-yl)glycerol 3-phosphate + CO2 + H2O</text>
        <dbReference type="Rhea" id="RHEA:23476"/>
        <dbReference type="ChEBI" id="CHEBI:15377"/>
        <dbReference type="ChEBI" id="CHEBI:15378"/>
        <dbReference type="ChEBI" id="CHEBI:16526"/>
        <dbReference type="ChEBI" id="CHEBI:58613"/>
        <dbReference type="ChEBI" id="CHEBI:58866"/>
        <dbReference type="EC" id="4.1.1.48"/>
    </reaction>
</comment>
<comment type="pathway">
    <text evidence="1">Amino-acid biosynthesis; L-tryptophan biosynthesis; L-tryptophan from chorismate: step 4/5.</text>
</comment>
<comment type="similarity">
    <text evidence="1">Belongs to the TrpC family.</text>
</comment>
<reference key="1">
    <citation type="submission" date="2005-07" db="EMBL/GenBank/DDBJ databases">
        <title>Complete sequence of Synechococcus sp. CC9605.</title>
        <authorList>
            <consortium name="US DOE Joint Genome Institute"/>
            <person name="Copeland A."/>
            <person name="Lucas S."/>
            <person name="Lapidus A."/>
            <person name="Barry K."/>
            <person name="Detter J.C."/>
            <person name="Glavina T."/>
            <person name="Hammon N."/>
            <person name="Israni S."/>
            <person name="Pitluck S."/>
            <person name="Schmutz J."/>
            <person name="Martinez M."/>
            <person name="Larimer F."/>
            <person name="Land M."/>
            <person name="Kyrpides N."/>
            <person name="Ivanova N."/>
            <person name="Richardson P."/>
        </authorList>
    </citation>
    <scope>NUCLEOTIDE SEQUENCE [LARGE SCALE GENOMIC DNA]</scope>
    <source>
        <strain>CC9605</strain>
    </source>
</reference>
<evidence type="ECO:0000255" key="1">
    <source>
        <dbReference type="HAMAP-Rule" id="MF_00134"/>
    </source>
</evidence>
<dbReference type="EC" id="4.1.1.48" evidence="1"/>
<dbReference type="EMBL" id="CP000110">
    <property type="protein sequence ID" value="ABB34638.1"/>
    <property type="molecule type" value="Genomic_DNA"/>
</dbReference>
<dbReference type="RefSeq" id="WP_011363863.1">
    <property type="nucleotide sequence ID" value="NC_007516.1"/>
</dbReference>
<dbReference type="SMR" id="Q3AL94"/>
<dbReference type="STRING" id="110662.Syncc9605_0870"/>
<dbReference type="KEGG" id="syd:Syncc9605_0870"/>
<dbReference type="eggNOG" id="COG0134">
    <property type="taxonomic scope" value="Bacteria"/>
</dbReference>
<dbReference type="HOGENOM" id="CLU_034247_1_0_3"/>
<dbReference type="OrthoDB" id="9804217at2"/>
<dbReference type="UniPathway" id="UPA00035">
    <property type="reaction ID" value="UER00043"/>
</dbReference>
<dbReference type="GO" id="GO:0004425">
    <property type="term" value="F:indole-3-glycerol-phosphate synthase activity"/>
    <property type="evidence" value="ECO:0007669"/>
    <property type="project" value="UniProtKB-UniRule"/>
</dbReference>
<dbReference type="GO" id="GO:0004640">
    <property type="term" value="F:phosphoribosylanthranilate isomerase activity"/>
    <property type="evidence" value="ECO:0007669"/>
    <property type="project" value="TreeGrafter"/>
</dbReference>
<dbReference type="GO" id="GO:0000162">
    <property type="term" value="P:L-tryptophan biosynthetic process"/>
    <property type="evidence" value="ECO:0007669"/>
    <property type="project" value="UniProtKB-UniRule"/>
</dbReference>
<dbReference type="CDD" id="cd00331">
    <property type="entry name" value="IGPS"/>
    <property type="match status" value="1"/>
</dbReference>
<dbReference type="FunFam" id="3.20.20.70:FF:000024">
    <property type="entry name" value="Indole-3-glycerol phosphate synthase"/>
    <property type="match status" value="1"/>
</dbReference>
<dbReference type="Gene3D" id="3.20.20.70">
    <property type="entry name" value="Aldolase class I"/>
    <property type="match status" value="1"/>
</dbReference>
<dbReference type="HAMAP" id="MF_00134_B">
    <property type="entry name" value="IGPS_B"/>
    <property type="match status" value="1"/>
</dbReference>
<dbReference type="InterPro" id="IPR013785">
    <property type="entry name" value="Aldolase_TIM"/>
</dbReference>
<dbReference type="InterPro" id="IPR045186">
    <property type="entry name" value="Indole-3-glycerol_P_synth"/>
</dbReference>
<dbReference type="InterPro" id="IPR013798">
    <property type="entry name" value="Indole-3-glycerol_P_synth_dom"/>
</dbReference>
<dbReference type="InterPro" id="IPR001468">
    <property type="entry name" value="Indole-3-GlycerolPSynthase_CS"/>
</dbReference>
<dbReference type="InterPro" id="IPR011060">
    <property type="entry name" value="RibuloseP-bd_barrel"/>
</dbReference>
<dbReference type="NCBIfam" id="NF001372">
    <property type="entry name" value="PRK00278.1-4"/>
    <property type="match status" value="1"/>
</dbReference>
<dbReference type="NCBIfam" id="NF001377">
    <property type="entry name" value="PRK00278.2-4"/>
    <property type="match status" value="1"/>
</dbReference>
<dbReference type="PANTHER" id="PTHR22854:SF2">
    <property type="entry name" value="INDOLE-3-GLYCEROL-PHOSPHATE SYNTHASE"/>
    <property type="match status" value="1"/>
</dbReference>
<dbReference type="PANTHER" id="PTHR22854">
    <property type="entry name" value="TRYPTOPHAN BIOSYNTHESIS PROTEIN"/>
    <property type="match status" value="1"/>
</dbReference>
<dbReference type="Pfam" id="PF00218">
    <property type="entry name" value="IGPS"/>
    <property type="match status" value="1"/>
</dbReference>
<dbReference type="SUPFAM" id="SSF51366">
    <property type="entry name" value="Ribulose-phoshate binding barrel"/>
    <property type="match status" value="1"/>
</dbReference>
<dbReference type="PROSITE" id="PS00614">
    <property type="entry name" value="IGPS"/>
    <property type="match status" value="1"/>
</dbReference>
<protein>
    <recommendedName>
        <fullName evidence="1">Indole-3-glycerol phosphate synthase</fullName>
        <shortName evidence="1">IGPS</shortName>
        <ecNumber evidence="1">4.1.1.48</ecNumber>
    </recommendedName>
</protein>
<keyword id="KW-0028">Amino-acid biosynthesis</keyword>
<keyword id="KW-0057">Aromatic amino acid biosynthesis</keyword>
<keyword id="KW-0210">Decarboxylase</keyword>
<keyword id="KW-0456">Lyase</keyword>
<keyword id="KW-0822">Tryptophan biosynthesis</keyword>
<gene>
    <name evidence="1" type="primary">trpC</name>
    <name type="ordered locus">Syncc9605_0870</name>
</gene>
<name>TRPC_SYNSC</name>